<accession>Q14JK5</accession>
<keyword id="KW-0687">Ribonucleoprotein</keyword>
<keyword id="KW-0689">Ribosomal protein</keyword>
<name>RL34_FRAT1</name>
<evidence type="ECO:0000255" key="1">
    <source>
        <dbReference type="HAMAP-Rule" id="MF_00391"/>
    </source>
</evidence>
<evidence type="ECO:0000305" key="2"/>
<feature type="chain" id="PRO_1000013338" description="Large ribosomal subunit protein bL34">
    <location>
        <begin position="1"/>
        <end position="44"/>
    </location>
</feature>
<gene>
    <name evidence="1" type="primary">rpmH</name>
    <name type="ordered locus">FTF0236c</name>
</gene>
<comment type="similarity">
    <text evidence="1">Belongs to the bacterial ribosomal protein bL34 family.</text>
</comment>
<protein>
    <recommendedName>
        <fullName evidence="1">Large ribosomal subunit protein bL34</fullName>
    </recommendedName>
    <alternativeName>
        <fullName evidence="2">50S ribosomal protein L34</fullName>
    </alternativeName>
</protein>
<dbReference type="EMBL" id="AM286280">
    <property type="protein sequence ID" value="CAL08252.1"/>
    <property type="molecule type" value="Genomic_DNA"/>
</dbReference>
<dbReference type="RefSeq" id="WP_003014180.1">
    <property type="nucleotide sequence ID" value="NC_008245.1"/>
</dbReference>
<dbReference type="SMR" id="Q14JK5"/>
<dbReference type="GeneID" id="93255665"/>
<dbReference type="KEGG" id="ftf:FTF0236c"/>
<dbReference type="HOGENOM" id="CLU_129938_2_0_6"/>
<dbReference type="GO" id="GO:1990904">
    <property type="term" value="C:ribonucleoprotein complex"/>
    <property type="evidence" value="ECO:0007669"/>
    <property type="project" value="UniProtKB-KW"/>
</dbReference>
<dbReference type="GO" id="GO:0005840">
    <property type="term" value="C:ribosome"/>
    <property type="evidence" value="ECO:0007669"/>
    <property type="project" value="UniProtKB-KW"/>
</dbReference>
<dbReference type="GO" id="GO:0003735">
    <property type="term" value="F:structural constituent of ribosome"/>
    <property type="evidence" value="ECO:0007669"/>
    <property type="project" value="InterPro"/>
</dbReference>
<dbReference type="GO" id="GO:0006412">
    <property type="term" value="P:translation"/>
    <property type="evidence" value="ECO:0007669"/>
    <property type="project" value="UniProtKB-UniRule"/>
</dbReference>
<dbReference type="FunFam" id="1.10.287.3980:FF:000001">
    <property type="entry name" value="Mitochondrial ribosomal protein L34"/>
    <property type="match status" value="1"/>
</dbReference>
<dbReference type="Gene3D" id="1.10.287.3980">
    <property type="match status" value="1"/>
</dbReference>
<dbReference type="HAMAP" id="MF_00391">
    <property type="entry name" value="Ribosomal_bL34"/>
    <property type="match status" value="1"/>
</dbReference>
<dbReference type="InterPro" id="IPR000271">
    <property type="entry name" value="Ribosomal_bL34"/>
</dbReference>
<dbReference type="InterPro" id="IPR020939">
    <property type="entry name" value="Ribosomal_bL34_CS"/>
</dbReference>
<dbReference type="NCBIfam" id="TIGR01030">
    <property type="entry name" value="rpmH_bact"/>
    <property type="match status" value="1"/>
</dbReference>
<dbReference type="PANTHER" id="PTHR14503:SF4">
    <property type="entry name" value="LARGE RIBOSOMAL SUBUNIT PROTEIN BL34M"/>
    <property type="match status" value="1"/>
</dbReference>
<dbReference type="PANTHER" id="PTHR14503">
    <property type="entry name" value="MITOCHONDRIAL RIBOSOMAL PROTEIN 34 FAMILY MEMBER"/>
    <property type="match status" value="1"/>
</dbReference>
<dbReference type="Pfam" id="PF00468">
    <property type="entry name" value="Ribosomal_L34"/>
    <property type="match status" value="1"/>
</dbReference>
<dbReference type="PROSITE" id="PS00784">
    <property type="entry name" value="RIBOSOMAL_L34"/>
    <property type="match status" value="1"/>
</dbReference>
<proteinExistence type="inferred from homology"/>
<reference key="1">
    <citation type="journal article" date="2007" name="PLoS ONE">
        <title>Genome sequencing shows that European isolates of Francisella tularensis subspecies tularensis are almost identical to US laboratory strain Schu S4.</title>
        <authorList>
            <person name="Chaudhuri R.R."/>
            <person name="Ren C.-P."/>
            <person name="Desmond L."/>
            <person name="Vincent G.A."/>
            <person name="Silman N.J."/>
            <person name="Brehm J.K."/>
            <person name="Elmore M.J."/>
            <person name="Hudson M.J."/>
            <person name="Forsman M."/>
            <person name="Isherwood K.E."/>
            <person name="Gurycova D."/>
            <person name="Minton N.P."/>
            <person name="Titball R.W."/>
            <person name="Pallen M.J."/>
            <person name="Vipond R."/>
        </authorList>
    </citation>
    <scope>NUCLEOTIDE SEQUENCE [LARGE SCALE GENOMIC DNA]</scope>
    <source>
        <strain>FSC 198</strain>
    </source>
</reference>
<organism>
    <name type="scientific">Francisella tularensis subsp. tularensis (strain FSC 198)</name>
    <dbReference type="NCBI Taxonomy" id="393115"/>
    <lineage>
        <taxon>Bacteria</taxon>
        <taxon>Pseudomonadati</taxon>
        <taxon>Pseudomonadota</taxon>
        <taxon>Gammaproteobacteria</taxon>
        <taxon>Thiotrichales</taxon>
        <taxon>Francisellaceae</taxon>
        <taxon>Francisella</taxon>
    </lineage>
</organism>
<sequence length="44" mass="5180">MKRTFQPSNLKRKRTHGFRARMKTLSGRKVIRNRRAKGRAKLAA</sequence>